<reference key="1">
    <citation type="journal article" date="2007" name="J. Bacteriol.">
        <title>Complete genome sequence of Haemophilus somnus (Histophilus somni) strain 129Pt and comparison to Haemophilus ducreyi 35000HP and Haemophilus influenzae Rd.</title>
        <authorList>
            <person name="Challacombe J.F."/>
            <person name="Duncan A.J."/>
            <person name="Brettin T.S."/>
            <person name="Bruce D."/>
            <person name="Chertkov O."/>
            <person name="Detter J.C."/>
            <person name="Han C.S."/>
            <person name="Misra M."/>
            <person name="Richardson P."/>
            <person name="Tapia R."/>
            <person name="Thayer N."/>
            <person name="Xie G."/>
            <person name="Inzana T.J."/>
        </authorList>
    </citation>
    <scope>NUCLEOTIDE SEQUENCE [LARGE SCALE GENOMIC DNA]</scope>
    <source>
        <strain>129Pt</strain>
    </source>
</reference>
<dbReference type="EC" id="4.3.3.7" evidence="1"/>
<dbReference type="EMBL" id="CP000436">
    <property type="protein sequence ID" value="ABI24769.1"/>
    <property type="molecule type" value="Genomic_DNA"/>
</dbReference>
<dbReference type="SMR" id="Q0I260"/>
<dbReference type="KEGG" id="hso:HS_0492"/>
<dbReference type="eggNOG" id="COG0329">
    <property type="taxonomic scope" value="Bacteria"/>
</dbReference>
<dbReference type="HOGENOM" id="CLU_049343_7_1_6"/>
<dbReference type="UniPathway" id="UPA00034">
    <property type="reaction ID" value="UER00017"/>
</dbReference>
<dbReference type="GO" id="GO:0005829">
    <property type="term" value="C:cytosol"/>
    <property type="evidence" value="ECO:0007669"/>
    <property type="project" value="TreeGrafter"/>
</dbReference>
<dbReference type="GO" id="GO:0008840">
    <property type="term" value="F:4-hydroxy-tetrahydrodipicolinate synthase activity"/>
    <property type="evidence" value="ECO:0007669"/>
    <property type="project" value="UniProtKB-UniRule"/>
</dbReference>
<dbReference type="GO" id="GO:0019877">
    <property type="term" value="P:diaminopimelate biosynthetic process"/>
    <property type="evidence" value="ECO:0007669"/>
    <property type="project" value="UniProtKB-UniRule"/>
</dbReference>
<dbReference type="GO" id="GO:0009089">
    <property type="term" value="P:lysine biosynthetic process via diaminopimelate"/>
    <property type="evidence" value="ECO:0007669"/>
    <property type="project" value="UniProtKB-UniRule"/>
</dbReference>
<dbReference type="CDD" id="cd00950">
    <property type="entry name" value="DHDPS"/>
    <property type="match status" value="1"/>
</dbReference>
<dbReference type="FunFam" id="3.20.20.70:FF:000046">
    <property type="entry name" value="4-hydroxy-tetrahydrodipicolinate synthase"/>
    <property type="match status" value="1"/>
</dbReference>
<dbReference type="Gene3D" id="3.20.20.70">
    <property type="entry name" value="Aldolase class I"/>
    <property type="match status" value="1"/>
</dbReference>
<dbReference type="HAMAP" id="MF_00418">
    <property type="entry name" value="DapA"/>
    <property type="match status" value="1"/>
</dbReference>
<dbReference type="InterPro" id="IPR013785">
    <property type="entry name" value="Aldolase_TIM"/>
</dbReference>
<dbReference type="InterPro" id="IPR005263">
    <property type="entry name" value="DapA"/>
</dbReference>
<dbReference type="InterPro" id="IPR002220">
    <property type="entry name" value="DapA-like"/>
</dbReference>
<dbReference type="InterPro" id="IPR020625">
    <property type="entry name" value="Schiff_base-form_aldolases_AS"/>
</dbReference>
<dbReference type="InterPro" id="IPR020624">
    <property type="entry name" value="Schiff_base-form_aldolases_CS"/>
</dbReference>
<dbReference type="NCBIfam" id="TIGR00674">
    <property type="entry name" value="dapA"/>
    <property type="match status" value="1"/>
</dbReference>
<dbReference type="PANTHER" id="PTHR12128:SF66">
    <property type="entry name" value="4-HYDROXY-2-OXOGLUTARATE ALDOLASE, MITOCHONDRIAL"/>
    <property type="match status" value="1"/>
</dbReference>
<dbReference type="PANTHER" id="PTHR12128">
    <property type="entry name" value="DIHYDRODIPICOLINATE SYNTHASE"/>
    <property type="match status" value="1"/>
</dbReference>
<dbReference type="Pfam" id="PF00701">
    <property type="entry name" value="DHDPS"/>
    <property type="match status" value="1"/>
</dbReference>
<dbReference type="PIRSF" id="PIRSF001365">
    <property type="entry name" value="DHDPS"/>
    <property type="match status" value="1"/>
</dbReference>
<dbReference type="PRINTS" id="PR00146">
    <property type="entry name" value="DHPICSNTHASE"/>
</dbReference>
<dbReference type="SMART" id="SM01130">
    <property type="entry name" value="DHDPS"/>
    <property type="match status" value="1"/>
</dbReference>
<dbReference type="SUPFAM" id="SSF51569">
    <property type="entry name" value="Aldolase"/>
    <property type="match status" value="1"/>
</dbReference>
<dbReference type="PROSITE" id="PS00665">
    <property type="entry name" value="DHDPS_1"/>
    <property type="match status" value="1"/>
</dbReference>
<dbReference type="PROSITE" id="PS00666">
    <property type="entry name" value="DHDPS_2"/>
    <property type="match status" value="1"/>
</dbReference>
<feature type="chain" id="PRO_1000050195" description="4-hydroxy-tetrahydrodipicolinate synthase">
    <location>
        <begin position="1"/>
        <end position="298"/>
    </location>
</feature>
<feature type="active site" description="Proton donor/acceptor" evidence="1">
    <location>
        <position position="139"/>
    </location>
</feature>
<feature type="active site" description="Schiff-base intermediate with substrate" evidence="1">
    <location>
        <position position="167"/>
    </location>
</feature>
<feature type="binding site" evidence="1">
    <location>
        <position position="51"/>
    </location>
    <ligand>
        <name>pyruvate</name>
        <dbReference type="ChEBI" id="CHEBI:15361"/>
    </ligand>
</feature>
<feature type="binding site" evidence="1">
    <location>
        <position position="209"/>
    </location>
    <ligand>
        <name>pyruvate</name>
        <dbReference type="ChEBI" id="CHEBI:15361"/>
    </ligand>
</feature>
<feature type="site" description="Part of a proton relay during catalysis" evidence="1">
    <location>
        <position position="50"/>
    </location>
</feature>
<feature type="site" description="Part of a proton relay during catalysis" evidence="1">
    <location>
        <position position="113"/>
    </location>
</feature>
<evidence type="ECO:0000255" key="1">
    <source>
        <dbReference type="HAMAP-Rule" id="MF_00418"/>
    </source>
</evidence>
<evidence type="ECO:0000305" key="2"/>
<name>DAPA_HISS1</name>
<organism>
    <name type="scientific">Histophilus somni (strain 129Pt)</name>
    <name type="common">Haemophilus somnus</name>
    <dbReference type="NCBI Taxonomy" id="205914"/>
    <lineage>
        <taxon>Bacteria</taxon>
        <taxon>Pseudomonadati</taxon>
        <taxon>Pseudomonadota</taxon>
        <taxon>Gammaproteobacteria</taxon>
        <taxon>Pasteurellales</taxon>
        <taxon>Pasteurellaceae</taxon>
        <taxon>Histophilus</taxon>
    </lineage>
</organism>
<sequence length="298" mass="31863">MTTHRPLFYGSITALITPMNNHGEVDFNALKKLVEYHIVSGTHAIVSVGTTGESATLSIAENVKTILKTLEFADGRIPIIAGTGANATSEAITMTKLLNDSGVAGCLSVVPYYNKPTQEGMYQHFKAIAECTDIPQILYNVPSRTGSDLLPETVGRLSQIANIVGIKEATGDVSRVAKIKQMAGEDFIFLSGDDATGLESMKLGGQGVISVTNNIAAADMAKMCELALAGKFDEAEIINDKLRALHKDLFIESNPIPVKWAAYKLGLVPDPILRLPLTTLSEQAQPKIINALKNAGLL</sequence>
<keyword id="KW-0028">Amino-acid biosynthesis</keyword>
<keyword id="KW-0963">Cytoplasm</keyword>
<keyword id="KW-0220">Diaminopimelate biosynthesis</keyword>
<keyword id="KW-0456">Lyase</keyword>
<keyword id="KW-0457">Lysine biosynthesis</keyword>
<keyword id="KW-0704">Schiff base</keyword>
<comment type="function">
    <text evidence="1">Catalyzes the condensation of (S)-aspartate-beta-semialdehyde [(S)-ASA] and pyruvate to 4-hydroxy-tetrahydrodipicolinate (HTPA).</text>
</comment>
<comment type="catalytic activity">
    <reaction evidence="1">
        <text>L-aspartate 4-semialdehyde + pyruvate = (2S,4S)-4-hydroxy-2,3,4,5-tetrahydrodipicolinate + H2O + H(+)</text>
        <dbReference type="Rhea" id="RHEA:34171"/>
        <dbReference type="ChEBI" id="CHEBI:15361"/>
        <dbReference type="ChEBI" id="CHEBI:15377"/>
        <dbReference type="ChEBI" id="CHEBI:15378"/>
        <dbReference type="ChEBI" id="CHEBI:67139"/>
        <dbReference type="ChEBI" id="CHEBI:537519"/>
        <dbReference type="EC" id="4.3.3.7"/>
    </reaction>
</comment>
<comment type="pathway">
    <text evidence="1">Amino-acid biosynthesis; L-lysine biosynthesis via DAP pathway; (S)-tetrahydrodipicolinate from L-aspartate: step 3/4.</text>
</comment>
<comment type="subunit">
    <text evidence="1">Homotetramer; dimer of dimers.</text>
</comment>
<comment type="subcellular location">
    <subcellularLocation>
        <location evidence="1">Cytoplasm</location>
    </subcellularLocation>
</comment>
<comment type="similarity">
    <text evidence="1">Belongs to the DapA family.</text>
</comment>
<comment type="caution">
    <text evidence="2">Was originally thought to be a dihydrodipicolinate synthase (DHDPS), catalyzing the condensation of (S)-aspartate-beta-semialdehyde [(S)-ASA] and pyruvate to dihydrodipicolinate (DHDP). However, it was shown in E.coli that the product of the enzymatic reaction is not dihydrodipicolinate but in fact (4S)-4-hydroxy-2,3,4,5-tetrahydro-(2S)-dipicolinic acid (HTPA), and that the consecutive dehydration reaction leading to DHDP is not spontaneous but catalyzed by DapB.</text>
</comment>
<accession>Q0I260</accession>
<protein>
    <recommendedName>
        <fullName evidence="1">4-hydroxy-tetrahydrodipicolinate synthase</fullName>
        <shortName evidence="1">HTPA synthase</shortName>
        <ecNumber evidence="1">4.3.3.7</ecNumber>
    </recommendedName>
</protein>
<gene>
    <name evidence="1" type="primary">dapA</name>
    <name type="ordered locus">HS_0492</name>
</gene>
<proteinExistence type="inferred from homology"/>